<sequence length="230" mass="25868">MAVVSLSEMMEAGAHFGHQTRRWNPKMSRYIYSARNGVHIIDLVKTAVCMNSAYKWTRGAARSGKRFLFVGTKKQASEVVAQEAIRCGASYVNQRWLGGMLTNWTTMKARIDRLKDLERMESSGAIAMRPKKEGAVLRRELERLQKYLGGLKGMRRLPDVVVLVDQRRETNAVLEARKLDIPLVSMLDTNCDPDLCEIPIPCNDDAVRSVQLVLGRLADAINEGRHGPNE</sequence>
<feature type="chain" id="PRO_0000352024" description="Small ribosomal subunit protein uS2">
    <location>
        <begin position="1"/>
        <end position="230"/>
    </location>
</feature>
<accession>Q46LH9</accession>
<evidence type="ECO:0000255" key="1">
    <source>
        <dbReference type="HAMAP-Rule" id="MF_00291"/>
    </source>
</evidence>
<evidence type="ECO:0000305" key="2"/>
<keyword id="KW-1185">Reference proteome</keyword>
<keyword id="KW-0687">Ribonucleoprotein</keyword>
<keyword id="KW-0689">Ribosomal protein</keyword>
<comment type="similarity">
    <text evidence="1">Belongs to the universal ribosomal protein uS2 family.</text>
</comment>
<comment type="sequence caution" evidence="2">
    <conflict type="erroneous initiation">
        <sequence resource="EMBL-CDS" id="AAZ57649"/>
    </conflict>
</comment>
<name>RS2_PROMT</name>
<dbReference type="EMBL" id="CP000095">
    <property type="protein sequence ID" value="AAZ57649.1"/>
    <property type="status" value="ALT_INIT"/>
    <property type="molecule type" value="Genomic_DNA"/>
</dbReference>
<dbReference type="RefSeq" id="WP_011293691.1">
    <property type="nucleotide sequence ID" value="NC_007335.2"/>
</dbReference>
<dbReference type="SMR" id="Q46LH9"/>
<dbReference type="STRING" id="59920.PMN2A_0157"/>
<dbReference type="KEGG" id="pmn:PMN2A_0157"/>
<dbReference type="HOGENOM" id="CLU_040318_1_2_3"/>
<dbReference type="OrthoDB" id="9808036at2"/>
<dbReference type="PhylomeDB" id="Q46LH9"/>
<dbReference type="Proteomes" id="UP000002535">
    <property type="component" value="Chromosome"/>
</dbReference>
<dbReference type="GO" id="GO:0022627">
    <property type="term" value="C:cytosolic small ribosomal subunit"/>
    <property type="evidence" value="ECO:0007669"/>
    <property type="project" value="TreeGrafter"/>
</dbReference>
<dbReference type="GO" id="GO:0003735">
    <property type="term" value="F:structural constituent of ribosome"/>
    <property type="evidence" value="ECO:0007669"/>
    <property type="project" value="InterPro"/>
</dbReference>
<dbReference type="GO" id="GO:0006412">
    <property type="term" value="P:translation"/>
    <property type="evidence" value="ECO:0007669"/>
    <property type="project" value="UniProtKB-UniRule"/>
</dbReference>
<dbReference type="CDD" id="cd01425">
    <property type="entry name" value="RPS2"/>
    <property type="match status" value="1"/>
</dbReference>
<dbReference type="FunFam" id="1.10.287.610:FF:000001">
    <property type="entry name" value="30S ribosomal protein S2"/>
    <property type="match status" value="1"/>
</dbReference>
<dbReference type="Gene3D" id="3.40.50.10490">
    <property type="entry name" value="Glucose-6-phosphate isomerase like protein, domain 1"/>
    <property type="match status" value="1"/>
</dbReference>
<dbReference type="Gene3D" id="1.10.287.610">
    <property type="entry name" value="Helix hairpin bin"/>
    <property type="match status" value="1"/>
</dbReference>
<dbReference type="HAMAP" id="MF_00291_B">
    <property type="entry name" value="Ribosomal_uS2_B"/>
    <property type="match status" value="1"/>
</dbReference>
<dbReference type="InterPro" id="IPR001865">
    <property type="entry name" value="Ribosomal_uS2"/>
</dbReference>
<dbReference type="InterPro" id="IPR005706">
    <property type="entry name" value="Ribosomal_uS2_bac/mit/plastid"/>
</dbReference>
<dbReference type="InterPro" id="IPR018130">
    <property type="entry name" value="Ribosomal_uS2_CS"/>
</dbReference>
<dbReference type="InterPro" id="IPR023591">
    <property type="entry name" value="Ribosomal_uS2_flav_dom_sf"/>
</dbReference>
<dbReference type="NCBIfam" id="TIGR01011">
    <property type="entry name" value="rpsB_bact"/>
    <property type="match status" value="1"/>
</dbReference>
<dbReference type="PANTHER" id="PTHR12534">
    <property type="entry name" value="30S RIBOSOMAL PROTEIN S2 PROKARYOTIC AND ORGANELLAR"/>
    <property type="match status" value="1"/>
</dbReference>
<dbReference type="PANTHER" id="PTHR12534:SF0">
    <property type="entry name" value="SMALL RIBOSOMAL SUBUNIT PROTEIN US2M"/>
    <property type="match status" value="1"/>
</dbReference>
<dbReference type="Pfam" id="PF00318">
    <property type="entry name" value="Ribosomal_S2"/>
    <property type="match status" value="1"/>
</dbReference>
<dbReference type="PRINTS" id="PR00395">
    <property type="entry name" value="RIBOSOMALS2"/>
</dbReference>
<dbReference type="SUPFAM" id="SSF52313">
    <property type="entry name" value="Ribosomal protein S2"/>
    <property type="match status" value="1"/>
</dbReference>
<dbReference type="PROSITE" id="PS00962">
    <property type="entry name" value="RIBOSOMAL_S2_1"/>
    <property type="match status" value="1"/>
</dbReference>
<protein>
    <recommendedName>
        <fullName evidence="1">Small ribosomal subunit protein uS2</fullName>
    </recommendedName>
    <alternativeName>
        <fullName evidence="2">30S ribosomal protein S2</fullName>
    </alternativeName>
</protein>
<proteinExistence type="inferred from homology"/>
<gene>
    <name evidence="1" type="primary">rpsB</name>
    <name evidence="1" type="synonym">rps2</name>
    <name type="ordered locus">PMN2A_0157</name>
</gene>
<organism>
    <name type="scientific">Prochlorococcus marinus (strain NATL2A)</name>
    <dbReference type="NCBI Taxonomy" id="59920"/>
    <lineage>
        <taxon>Bacteria</taxon>
        <taxon>Bacillati</taxon>
        <taxon>Cyanobacteriota</taxon>
        <taxon>Cyanophyceae</taxon>
        <taxon>Synechococcales</taxon>
        <taxon>Prochlorococcaceae</taxon>
        <taxon>Prochlorococcus</taxon>
    </lineage>
</organism>
<reference key="1">
    <citation type="journal article" date="2007" name="PLoS Genet.">
        <title>Patterns and implications of gene gain and loss in the evolution of Prochlorococcus.</title>
        <authorList>
            <person name="Kettler G.C."/>
            <person name="Martiny A.C."/>
            <person name="Huang K."/>
            <person name="Zucker J."/>
            <person name="Coleman M.L."/>
            <person name="Rodrigue S."/>
            <person name="Chen F."/>
            <person name="Lapidus A."/>
            <person name="Ferriera S."/>
            <person name="Johnson J."/>
            <person name="Steglich C."/>
            <person name="Church G.M."/>
            <person name="Richardson P."/>
            <person name="Chisholm S.W."/>
        </authorList>
    </citation>
    <scope>NUCLEOTIDE SEQUENCE [LARGE SCALE GENOMIC DNA]</scope>
    <source>
        <strain>NATL2A</strain>
    </source>
</reference>